<keyword id="KW-0378">Hydrolase</keyword>
<keyword id="KW-0479">Metal-binding</keyword>
<keyword id="KW-0482">Metalloprotease</keyword>
<keyword id="KW-0645">Protease</keyword>
<keyword id="KW-0862">Zinc</keyword>
<dbReference type="EMBL" id="CP001103">
    <property type="protein sequence ID" value="AEA96196.1"/>
    <property type="molecule type" value="Genomic_DNA"/>
</dbReference>
<dbReference type="SMR" id="B4S2B7"/>
<dbReference type="KEGG" id="amc:MADE_1000235"/>
<dbReference type="HOGENOM" id="CLU_073529_0_1_6"/>
<dbReference type="Proteomes" id="UP000001870">
    <property type="component" value="Chromosome"/>
</dbReference>
<dbReference type="GO" id="GO:0046872">
    <property type="term" value="F:metal ion binding"/>
    <property type="evidence" value="ECO:0007669"/>
    <property type="project" value="UniProtKB-KW"/>
</dbReference>
<dbReference type="GO" id="GO:0008237">
    <property type="term" value="F:metallopeptidase activity"/>
    <property type="evidence" value="ECO:0007669"/>
    <property type="project" value="UniProtKB-KW"/>
</dbReference>
<dbReference type="GO" id="GO:0006508">
    <property type="term" value="P:proteolysis"/>
    <property type="evidence" value="ECO:0007669"/>
    <property type="project" value="UniProtKB-KW"/>
</dbReference>
<dbReference type="CDD" id="cd08071">
    <property type="entry name" value="MPN_DUF2466"/>
    <property type="match status" value="1"/>
</dbReference>
<dbReference type="Gene3D" id="3.40.140.10">
    <property type="entry name" value="Cytidine Deaminase, domain 2"/>
    <property type="match status" value="1"/>
</dbReference>
<dbReference type="InterPro" id="IPR037518">
    <property type="entry name" value="MPN"/>
</dbReference>
<dbReference type="InterPro" id="IPR025657">
    <property type="entry name" value="RadC_JAB"/>
</dbReference>
<dbReference type="InterPro" id="IPR010994">
    <property type="entry name" value="RuvA_2-like"/>
</dbReference>
<dbReference type="InterPro" id="IPR001405">
    <property type="entry name" value="UPF0758"/>
</dbReference>
<dbReference type="InterPro" id="IPR020891">
    <property type="entry name" value="UPF0758_CS"/>
</dbReference>
<dbReference type="InterPro" id="IPR046778">
    <property type="entry name" value="UPF0758_N"/>
</dbReference>
<dbReference type="NCBIfam" id="NF000642">
    <property type="entry name" value="PRK00024.1"/>
    <property type="match status" value="1"/>
</dbReference>
<dbReference type="NCBIfam" id="TIGR00608">
    <property type="entry name" value="radc"/>
    <property type="match status" value="1"/>
</dbReference>
<dbReference type="PANTHER" id="PTHR30471">
    <property type="entry name" value="DNA REPAIR PROTEIN RADC"/>
    <property type="match status" value="1"/>
</dbReference>
<dbReference type="PANTHER" id="PTHR30471:SF3">
    <property type="entry name" value="UPF0758 PROTEIN YEES-RELATED"/>
    <property type="match status" value="1"/>
</dbReference>
<dbReference type="Pfam" id="PF04002">
    <property type="entry name" value="RadC"/>
    <property type="match status" value="1"/>
</dbReference>
<dbReference type="Pfam" id="PF20582">
    <property type="entry name" value="UPF0758_N"/>
    <property type="match status" value="1"/>
</dbReference>
<dbReference type="SUPFAM" id="SSF102712">
    <property type="entry name" value="JAB1/MPN domain"/>
    <property type="match status" value="1"/>
</dbReference>
<dbReference type="SUPFAM" id="SSF47781">
    <property type="entry name" value="RuvA domain 2-like"/>
    <property type="match status" value="1"/>
</dbReference>
<dbReference type="PROSITE" id="PS50249">
    <property type="entry name" value="MPN"/>
    <property type="match status" value="1"/>
</dbReference>
<dbReference type="PROSITE" id="PS01302">
    <property type="entry name" value="UPF0758"/>
    <property type="match status" value="1"/>
</dbReference>
<gene>
    <name type="ordered locus">MADE_1000235</name>
</gene>
<proteinExistence type="inferred from homology"/>
<name>Y049_ALTMD</name>
<reference key="1">
    <citation type="journal article" date="2008" name="ISME J.">
        <title>Comparative genomics of two ecotypes of the marine planktonic copiotroph Alteromonas macleodii suggests alternative lifestyles associated with different kinds of particulate organic matter.</title>
        <authorList>
            <person name="Ivars-Martinez E."/>
            <person name="Martin-Cuadrado A.-B."/>
            <person name="D'Auria G."/>
            <person name="Mira A."/>
            <person name="Ferriera S."/>
            <person name="Johnson J."/>
            <person name="Friedman R."/>
            <person name="Rodriguez-Valera F."/>
        </authorList>
    </citation>
    <scope>NUCLEOTIDE SEQUENCE [LARGE SCALE GENOMIC DNA]</scope>
    <source>
        <strain>DSM 17117 / CIP 110805 / LMG 28347 / Deep ecotype</strain>
    </source>
</reference>
<comment type="similarity">
    <text evidence="2">Belongs to the UPF0758 family.</text>
</comment>
<protein>
    <recommendedName>
        <fullName>UPF0758 protein MADE_1000235</fullName>
    </recommendedName>
</protein>
<evidence type="ECO:0000255" key="1">
    <source>
        <dbReference type="PROSITE-ProRule" id="PRU01182"/>
    </source>
</evidence>
<evidence type="ECO:0000305" key="2"/>
<feature type="chain" id="PRO_1000089788" description="UPF0758 protein MADE_1000235">
    <location>
        <begin position="1"/>
        <end position="225"/>
    </location>
</feature>
<feature type="domain" description="MPN" evidence="1">
    <location>
        <begin position="102"/>
        <end position="224"/>
    </location>
</feature>
<feature type="short sequence motif" description="JAMM motif" evidence="1">
    <location>
        <begin position="173"/>
        <end position="186"/>
    </location>
</feature>
<feature type="binding site" evidence="1">
    <location>
        <position position="173"/>
    </location>
    <ligand>
        <name>Zn(2+)</name>
        <dbReference type="ChEBI" id="CHEBI:29105"/>
        <note>catalytic</note>
    </ligand>
</feature>
<feature type="binding site" evidence="1">
    <location>
        <position position="175"/>
    </location>
    <ligand>
        <name>Zn(2+)</name>
        <dbReference type="ChEBI" id="CHEBI:29105"/>
        <note>catalytic</note>
    </ligand>
</feature>
<feature type="binding site" evidence="1">
    <location>
        <position position="186"/>
    </location>
    <ligand>
        <name>Zn(2+)</name>
        <dbReference type="ChEBI" id="CHEBI:29105"/>
        <note>catalytic</note>
    </ligand>
</feature>
<accession>B4S2B7</accession>
<accession>F2G1U9</accession>
<organism>
    <name type="scientific">Alteromonas mediterranea (strain DSM 17117 / CIP 110805 / LMG 28347 / Deep ecotype)</name>
    <dbReference type="NCBI Taxonomy" id="1774373"/>
    <lineage>
        <taxon>Bacteria</taxon>
        <taxon>Pseudomonadati</taxon>
        <taxon>Pseudomonadota</taxon>
        <taxon>Gammaproteobacteria</taxon>
        <taxon>Alteromonadales</taxon>
        <taxon>Alteromonadaceae</taxon>
        <taxon>Alteromonas/Salinimonas group</taxon>
        <taxon>Alteromonas</taxon>
    </lineage>
</organism>
<sequence>MSIKVWPKSERPREKLLQYGAENLSDAELIAVLLGKGVKGKNAVSVAHELLNELGCLRGVVTATKDEFAKVTGIGPCKYAQFQAGFEIFKRNLEIKLQREDVFNNVDDTKRYLQAKLRDCQREKFALLMLDSQHQLIAFRTMFNGTINSAAVYPRELIKQVMIDNAAAIILVHNHPSGVAEPSHADIRLTTEIKSAMASIDVPVLDHFVVGDKETISFAQRGLLT</sequence>